<keyword id="KW-0143">Chaperone</keyword>
<keyword id="KW-0963">Cytoplasm</keyword>
<keyword id="KW-0342">GTP-binding</keyword>
<keyword id="KW-0996">Nickel insertion</keyword>
<keyword id="KW-0547">Nucleotide-binding</keyword>
<keyword id="KW-1185">Reference proteome</keyword>
<reference key="1">
    <citation type="journal article" date="2007" name="Science">
        <title>Legumes symbioses: absence of nod genes in photosynthetic bradyrhizobia.</title>
        <authorList>
            <person name="Giraud E."/>
            <person name="Moulin L."/>
            <person name="Vallenet D."/>
            <person name="Barbe V."/>
            <person name="Cytryn E."/>
            <person name="Avarre J.-C."/>
            <person name="Jaubert M."/>
            <person name="Simon D."/>
            <person name="Cartieaux F."/>
            <person name="Prin Y."/>
            <person name="Bena G."/>
            <person name="Hannibal L."/>
            <person name="Fardoux J."/>
            <person name="Kojadinovic M."/>
            <person name="Vuillet L."/>
            <person name="Lajus A."/>
            <person name="Cruveiller S."/>
            <person name="Rouy Z."/>
            <person name="Mangenot S."/>
            <person name="Segurens B."/>
            <person name="Dossat C."/>
            <person name="Franck W.L."/>
            <person name="Chang W.-S."/>
            <person name="Saunders E."/>
            <person name="Bruce D."/>
            <person name="Richardson P."/>
            <person name="Normand P."/>
            <person name="Dreyfus B."/>
            <person name="Pignol D."/>
            <person name="Stacey G."/>
            <person name="Emerich D."/>
            <person name="Vermeglio A."/>
            <person name="Medigue C."/>
            <person name="Sadowsky M."/>
        </authorList>
    </citation>
    <scope>NUCLEOTIDE SEQUENCE [LARGE SCALE GENOMIC DNA]</scope>
    <source>
        <strain>BTAi1 / ATCC BAA-1182</strain>
    </source>
</reference>
<gene>
    <name evidence="1" type="primary">ureG2</name>
    <name type="ordered locus">BBta_4441</name>
</gene>
<name>UREG2_BRASB</name>
<evidence type="ECO:0000255" key="1">
    <source>
        <dbReference type="HAMAP-Rule" id="MF_01389"/>
    </source>
</evidence>
<sequence length="214" mass="23207">MSRLALTRADEPMTAARVGIGGPVGSGKTALVERLIPALQTRGIDIAVITNDLVTAEDAERVRRSGLIDPERVSAVEAGACPHTVIREDPTLNIEAADELERRFPGVELILLESGGDNLASTFSRDLTDFWMFVIDVAGGDDIPRKRGPGVIRADLLVINKVDLAPHVGVDLGRMQREATEVRGGRPVLLTNCRRGEGIEAIVDLLEREVLFRK</sequence>
<comment type="function">
    <text evidence="1">Facilitates the functional incorporation of the urease nickel metallocenter. This process requires GTP hydrolysis, probably effectuated by UreG.</text>
</comment>
<comment type="subunit">
    <text evidence="1">Homodimer. UreD, UreF and UreG form a complex that acts as a GTP-hydrolysis-dependent molecular chaperone, activating the urease apoprotein by helping to assemble the nickel containing metallocenter of UreC. The UreE protein probably delivers the nickel.</text>
</comment>
<comment type="subcellular location">
    <subcellularLocation>
        <location evidence="1">Cytoplasm</location>
    </subcellularLocation>
</comment>
<comment type="similarity">
    <text evidence="1">Belongs to the SIMIBI class G3E GTPase family. UreG subfamily.</text>
</comment>
<organism>
    <name type="scientific">Bradyrhizobium sp. (strain BTAi1 / ATCC BAA-1182)</name>
    <dbReference type="NCBI Taxonomy" id="288000"/>
    <lineage>
        <taxon>Bacteria</taxon>
        <taxon>Pseudomonadati</taxon>
        <taxon>Pseudomonadota</taxon>
        <taxon>Alphaproteobacteria</taxon>
        <taxon>Hyphomicrobiales</taxon>
        <taxon>Nitrobacteraceae</taxon>
        <taxon>Bradyrhizobium</taxon>
    </lineage>
</organism>
<accession>A5EJY3</accession>
<proteinExistence type="inferred from homology"/>
<protein>
    <recommendedName>
        <fullName evidence="1">Urease accessory protein UreG 2</fullName>
    </recommendedName>
</protein>
<feature type="chain" id="PRO_0000347351" description="Urease accessory protein UreG 2">
    <location>
        <begin position="1"/>
        <end position="214"/>
    </location>
</feature>
<feature type="binding site" evidence="1">
    <location>
        <begin position="22"/>
        <end position="29"/>
    </location>
    <ligand>
        <name>GTP</name>
        <dbReference type="ChEBI" id="CHEBI:37565"/>
    </ligand>
</feature>
<dbReference type="EMBL" id="CP000494">
    <property type="protein sequence ID" value="ABQ36477.1"/>
    <property type="molecule type" value="Genomic_DNA"/>
</dbReference>
<dbReference type="RefSeq" id="WP_012044473.1">
    <property type="nucleotide sequence ID" value="NC_009485.1"/>
</dbReference>
<dbReference type="SMR" id="A5EJY3"/>
<dbReference type="STRING" id="288000.BBta_4441"/>
<dbReference type="KEGG" id="bbt:BBta_4441"/>
<dbReference type="eggNOG" id="COG0378">
    <property type="taxonomic scope" value="Bacteria"/>
</dbReference>
<dbReference type="HOGENOM" id="CLU_072144_1_0_5"/>
<dbReference type="OrthoDB" id="9802035at2"/>
<dbReference type="Proteomes" id="UP000000246">
    <property type="component" value="Chromosome"/>
</dbReference>
<dbReference type="GO" id="GO:0005737">
    <property type="term" value="C:cytoplasm"/>
    <property type="evidence" value="ECO:0007669"/>
    <property type="project" value="UniProtKB-SubCell"/>
</dbReference>
<dbReference type="GO" id="GO:0005525">
    <property type="term" value="F:GTP binding"/>
    <property type="evidence" value="ECO:0007669"/>
    <property type="project" value="UniProtKB-KW"/>
</dbReference>
<dbReference type="GO" id="GO:0003924">
    <property type="term" value="F:GTPase activity"/>
    <property type="evidence" value="ECO:0007669"/>
    <property type="project" value="InterPro"/>
</dbReference>
<dbReference type="GO" id="GO:0016151">
    <property type="term" value="F:nickel cation binding"/>
    <property type="evidence" value="ECO:0007669"/>
    <property type="project" value="UniProtKB-UniRule"/>
</dbReference>
<dbReference type="GO" id="GO:0043419">
    <property type="term" value="P:urea catabolic process"/>
    <property type="evidence" value="ECO:0007669"/>
    <property type="project" value="InterPro"/>
</dbReference>
<dbReference type="Gene3D" id="3.40.50.300">
    <property type="entry name" value="P-loop containing nucleotide triphosphate hydrolases"/>
    <property type="match status" value="1"/>
</dbReference>
<dbReference type="HAMAP" id="MF_01389">
    <property type="entry name" value="UreG"/>
    <property type="match status" value="1"/>
</dbReference>
<dbReference type="InterPro" id="IPR003495">
    <property type="entry name" value="CobW/HypB/UreG_nucleotide-bd"/>
</dbReference>
<dbReference type="InterPro" id="IPR027417">
    <property type="entry name" value="P-loop_NTPase"/>
</dbReference>
<dbReference type="InterPro" id="IPR004400">
    <property type="entry name" value="UreG"/>
</dbReference>
<dbReference type="NCBIfam" id="TIGR00101">
    <property type="entry name" value="ureG"/>
    <property type="match status" value="1"/>
</dbReference>
<dbReference type="PANTHER" id="PTHR31715">
    <property type="entry name" value="UREASE ACCESSORY PROTEIN G"/>
    <property type="match status" value="1"/>
</dbReference>
<dbReference type="PANTHER" id="PTHR31715:SF0">
    <property type="entry name" value="UREASE ACCESSORY PROTEIN G"/>
    <property type="match status" value="1"/>
</dbReference>
<dbReference type="Pfam" id="PF02492">
    <property type="entry name" value="cobW"/>
    <property type="match status" value="1"/>
</dbReference>
<dbReference type="PIRSF" id="PIRSF005624">
    <property type="entry name" value="Ni-bind_GTPase"/>
    <property type="match status" value="1"/>
</dbReference>
<dbReference type="SUPFAM" id="SSF52540">
    <property type="entry name" value="P-loop containing nucleoside triphosphate hydrolases"/>
    <property type="match status" value="1"/>
</dbReference>